<feature type="chain" id="PRO_1000097503" description="Translational regulator CsrA">
    <location>
        <begin position="1"/>
        <end position="61"/>
    </location>
</feature>
<dbReference type="EMBL" id="AM933172">
    <property type="protein sequence ID" value="CAR34246.1"/>
    <property type="molecule type" value="Genomic_DNA"/>
</dbReference>
<dbReference type="RefSeq" id="WP_000906486.1">
    <property type="nucleotide sequence ID" value="NC_011294.1"/>
</dbReference>
<dbReference type="SMR" id="B5QV75"/>
<dbReference type="GeneID" id="98389839"/>
<dbReference type="KEGG" id="set:SEN2667"/>
<dbReference type="HOGENOM" id="CLU_164837_2_1_6"/>
<dbReference type="Proteomes" id="UP000000613">
    <property type="component" value="Chromosome"/>
</dbReference>
<dbReference type="GO" id="GO:0005829">
    <property type="term" value="C:cytosol"/>
    <property type="evidence" value="ECO:0007669"/>
    <property type="project" value="TreeGrafter"/>
</dbReference>
<dbReference type="GO" id="GO:0048027">
    <property type="term" value="F:mRNA 5'-UTR binding"/>
    <property type="evidence" value="ECO:0007669"/>
    <property type="project" value="UniProtKB-UniRule"/>
</dbReference>
<dbReference type="GO" id="GO:0006402">
    <property type="term" value="P:mRNA catabolic process"/>
    <property type="evidence" value="ECO:0007669"/>
    <property type="project" value="InterPro"/>
</dbReference>
<dbReference type="GO" id="GO:0045947">
    <property type="term" value="P:negative regulation of translational initiation"/>
    <property type="evidence" value="ECO:0007669"/>
    <property type="project" value="UniProtKB-UniRule"/>
</dbReference>
<dbReference type="GO" id="GO:0045948">
    <property type="term" value="P:positive regulation of translational initiation"/>
    <property type="evidence" value="ECO:0007669"/>
    <property type="project" value="UniProtKB-UniRule"/>
</dbReference>
<dbReference type="GO" id="GO:0006109">
    <property type="term" value="P:regulation of carbohydrate metabolic process"/>
    <property type="evidence" value="ECO:0007669"/>
    <property type="project" value="UniProtKB-UniRule"/>
</dbReference>
<dbReference type="FunFam" id="2.60.40.4380:FF:000001">
    <property type="entry name" value="Translational regulator CsrA"/>
    <property type="match status" value="1"/>
</dbReference>
<dbReference type="Gene3D" id="2.60.40.4380">
    <property type="entry name" value="Translational regulator CsrA"/>
    <property type="match status" value="1"/>
</dbReference>
<dbReference type="HAMAP" id="MF_00167">
    <property type="entry name" value="CsrA"/>
    <property type="match status" value="1"/>
</dbReference>
<dbReference type="InterPro" id="IPR003751">
    <property type="entry name" value="CsrA"/>
</dbReference>
<dbReference type="InterPro" id="IPR036107">
    <property type="entry name" value="CsrA_sf"/>
</dbReference>
<dbReference type="NCBIfam" id="TIGR00202">
    <property type="entry name" value="csrA"/>
    <property type="match status" value="1"/>
</dbReference>
<dbReference type="NCBIfam" id="NF002469">
    <property type="entry name" value="PRK01712.1"/>
    <property type="match status" value="1"/>
</dbReference>
<dbReference type="PANTHER" id="PTHR34984">
    <property type="entry name" value="CARBON STORAGE REGULATOR"/>
    <property type="match status" value="1"/>
</dbReference>
<dbReference type="PANTHER" id="PTHR34984:SF1">
    <property type="entry name" value="CARBON STORAGE REGULATOR"/>
    <property type="match status" value="1"/>
</dbReference>
<dbReference type="Pfam" id="PF02599">
    <property type="entry name" value="CsrA"/>
    <property type="match status" value="1"/>
</dbReference>
<dbReference type="SUPFAM" id="SSF117130">
    <property type="entry name" value="CsrA-like"/>
    <property type="match status" value="1"/>
</dbReference>
<comment type="function">
    <text evidence="1">A key translational regulator that binds mRNA to regulate translation initiation and/or mRNA stability. Mediates global changes in gene expression, shifting from rapid growth to stress survival by linking envelope stress, the stringent response and the catabolite repression systems. Usually binds in the 5'-UTR; binding at or near the Shine-Dalgarno sequence prevents ribosome-binding, repressing translation, binding elsewhere in the 5'-UTR can activate translation and/or stabilize the mRNA. Its function is antagonized by small RNA(s).</text>
</comment>
<comment type="subunit">
    <text evidence="1">Homodimer; the beta-strands of each monomer intercalate to form a hydrophobic core, while the alpha-helices form wings that extend away from the core.</text>
</comment>
<comment type="subcellular location">
    <subcellularLocation>
        <location evidence="1">Cytoplasm</location>
    </subcellularLocation>
</comment>
<comment type="similarity">
    <text evidence="1">Belongs to the CsrA/RsmA family.</text>
</comment>
<reference key="1">
    <citation type="journal article" date="2008" name="Genome Res.">
        <title>Comparative genome analysis of Salmonella enteritidis PT4 and Salmonella gallinarum 287/91 provides insights into evolutionary and host adaptation pathways.</title>
        <authorList>
            <person name="Thomson N.R."/>
            <person name="Clayton D.J."/>
            <person name="Windhorst D."/>
            <person name="Vernikos G."/>
            <person name="Davidson S."/>
            <person name="Churcher C."/>
            <person name="Quail M.A."/>
            <person name="Stevens M."/>
            <person name="Jones M.A."/>
            <person name="Watson M."/>
            <person name="Barron A."/>
            <person name="Layton A."/>
            <person name="Pickard D."/>
            <person name="Kingsley R.A."/>
            <person name="Bignell A."/>
            <person name="Clark L."/>
            <person name="Harris B."/>
            <person name="Ormond D."/>
            <person name="Abdellah Z."/>
            <person name="Brooks K."/>
            <person name="Cherevach I."/>
            <person name="Chillingworth T."/>
            <person name="Woodward J."/>
            <person name="Norberczak H."/>
            <person name="Lord A."/>
            <person name="Arrowsmith C."/>
            <person name="Jagels K."/>
            <person name="Moule S."/>
            <person name="Mungall K."/>
            <person name="Saunders M."/>
            <person name="Whitehead S."/>
            <person name="Chabalgoity J.A."/>
            <person name="Maskell D."/>
            <person name="Humphreys T."/>
            <person name="Roberts M."/>
            <person name="Barrow P.A."/>
            <person name="Dougan G."/>
            <person name="Parkhill J."/>
        </authorList>
    </citation>
    <scope>NUCLEOTIDE SEQUENCE [LARGE SCALE GENOMIC DNA]</scope>
    <source>
        <strain>P125109</strain>
    </source>
</reference>
<proteinExistence type="inferred from homology"/>
<gene>
    <name evidence="1" type="primary">csrA</name>
    <name type="ordered locus">SEN2667</name>
</gene>
<organism>
    <name type="scientific">Salmonella enteritidis PT4 (strain P125109)</name>
    <dbReference type="NCBI Taxonomy" id="550537"/>
    <lineage>
        <taxon>Bacteria</taxon>
        <taxon>Pseudomonadati</taxon>
        <taxon>Pseudomonadota</taxon>
        <taxon>Gammaproteobacteria</taxon>
        <taxon>Enterobacterales</taxon>
        <taxon>Enterobacteriaceae</taxon>
        <taxon>Salmonella</taxon>
    </lineage>
</organism>
<evidence type="ECO:0000255" key="1">
    <source>
        <dbReference type="HAMAP-Rule" id="MF_00167"/>
    </source>
</evidence>
<sequence length="61" mass="6856">MLILTRRVGETLMIGDEVTVTVLGVKGNQVRIGVNAPKEVSVHREEIYQRIQAEKSQQSSY</sequence>
<protein>
    <recommendedName>
        <fullName evidence="1">Translational regulator CsrA</fullName>
    </recommendedName>
    <alternativeName>
        <fullName evidence="1">Carbon storage regulator</fullName>
    </alternativeName>
</protein>
<name>CSRA_SALEP</name>
<accession>B5QV75</accession>
<keyword id="KW-0010">Activator</keyword>
<keyword id="KW-0963">Cytoplasm</keyword>
<keyword id="KW-0678">Repressor</keyword>
<keyword id="KW-0694">RNA-binding</keyword>
<keyword id="KW-0810">Translation regulation</keyword>